<keyword id="KW-0328">Glycosyltransferase</keyword>
<keyword id="KW-0808">Transferase</keyword>
<evidence type="ECO:0000250" key="1"/>
<evidence type="ECO:0000250" key="2">
    <source>
        <dbReference type="UniProtKB" id="P49040"/>
    </source>
</evidence>
<evidence type="ECO:0000305" key="3"/>
<proteinExistence type="evidence at transcript level"/>
<name>SUS2_DAUCA</name>
<sequence>MAQPLLSLRQRFESTFSSHRQEIFMFLSRIQSLGNGILKPHQLFSEFQAISKIDRLKLEDSALVQLLNSAQEAIVCSPWIALAIRLRPGVWEYVRLNVHQLVVEELTVPDYLYLKEELVNASSNGNFVLELDFAPFTASIPRPTLTKSIGNGVEFLNRHLSAKMFQDKDSMHPLLDFLRLHHHNGRTLMLNNRVQTVNGLQDILRIAGEYLSKLPSDTPYSDFEHKFQEIGFERGWGDTAEHVSEMFHMLLDLLEAPDACTLETFLGKIPMIFNVVILSPHGYFAQENVLGYPDTGGQVVYILDQVPAMEREMTKRIKEQGLDIIPRILIVTRLLPDAVGTTCNLRLEKVFGAEHSHILRVPFRTEKGILRKWISRFEVWPYMETFTEDVAKEIALELKAKPDLIIGNYSEGNLVASLLANKLGVTQCTIAHALEKTKYPDSDIYWEKFDKKYHFSSQFTADLIAMNHTDFIITSTFQEIAGSKDTVGQYESHTAFTMPGLYRVVHGIDVFDPKFNIVSPGADTSVYYPYTEKKRRLTALHPEIEDLLFSSVENKEHICVLKDRYKPILFTMARLDNVKNLTGIVEWYAKNPKLRELVNLVVVGGDRRKESKDLEEQAQMKKMYGLIDTYKLNGQFRWISAQKNRVRNGELYRCIADTKGAFVQPAFYEAFGLTVIEAMTCGLPTFATIHGGPAEIIVHGTSGFHIDPYHGEKAAELIVNFFERCKTEPSHWETISAGGLKRIQEKYTWQIYSERLLTLGGVYGFWKHVSKLDRIEIRRYLEMFCALKYRNLAESVPLAVD</sequence>
<organism>
    <name type="scientific">Daucus carota</name>
    <name type="common">Wild carrot</name>
    <dbReference type="NCBI Taxonomy" id="4039"/>
    <lineage>
        <taxon>Eukaryota</taxon>
        <taxon>Viridiplantae</taxon>
        <taxon>Streptophyta</taxon>
        <taxon>Embryophyta</taxon>
        <taxon>Tracheophyta</taxon>
        <taxon>Spermatophyta</taxon>
        <taxon>Magnoliopsida</taxon>
        <taxon>eudicotyledons</taxon>
        <taxon>Gunneridae</taxon>
        <taxon>Pentapetalae</taxon>
        <taxon>asterids</taxon>
        <taxon>campanulids</taxon>
        <taxon>Apiales</taxon>
        <taxon>Apiaceae</taxon>
        <taxon>Apioideae</taxon>
        <taxon>Scandiceae</taxon>
        <taxon>Daucinae</taxon>
        <taxon>Daucus</taxon>
        <taxon>Daucus sect. Daucus</taxon>
    </lineage>
</organism>
<protein>
    <recommendedName>
        <fullName>Sucrose synthase isoform 2</fullName>
        <ecNumber>2.4.1.13</ecNumber>
    </recommendedName>
    <alternativeName>
        <fullName>Sucrose synthase isoform II</fullName>
    </alternativeName>
    <alternativeName>
        <fullName>Sucrose-UDP glucosyltransferase 2</fullName>
    </alternativeName>
    <alternativeName>
        <fullName>Susy*Dc2</fullName>
    </alternativeName>
</protein>
<reference key="1">
    <citation type="journal article" date="1999" name="Plant Mol. Biol.">
        <title>Tissue-specific expression of two genes for sucrose synthase in carrot (Daucus carota L.).</title>
        <authorList>
            <person name="Sturm A."/>
            <person name="Lienhard S."/>
            <person name="Schatt S."/>
            <person name="Hardegger M."/>
        </authorList>
    </citation>
    <scope>NUCLEOTIDE SEQUENCE [GENOMIC DNA]</scope>
    <source>
        <strain>cv. Nantaise</strain>
        <tissue>Leaf</tissue>
    </source>
</reference>
<feature type="chain" id="PRO_0000204648" description="Sucrose synthase isoform 2">
    <location>
        <begin position="1"/>
        <end position="801"/>
    </location>
</feature>
<feature type="region of interest" description="GT-B glycosyltransferase" evidence="2">
    <location>
        <begin position="271"/>
        <end position="748"/>
    </location>
</feature>
<dbReference type="EC" id="2.4.1.13"/>
<dbReference type="EMBL" id="Y16091">
    <property type="protein sequence ID" value="CAA76057.1"/>
    <property type="molecule type" value="Genomic_DNA"/>
</dbReference>
<dbReference type="PIR" id="T14338">
    <property type="entry name" value="T14338"/>
</dbReference>
<dbReference type="SMR" id="O49845"/>
<dbReference type="CAZy" id="GT4">
    <property type="family name" value="Glycosyltransferase Family 4"/>
</dbReference>
<dbReference type="BRENDA" id="2.4.1.13">
    <property type="organism ID" value="1841"/>
</dbReference>
<dbReference type="GO" id="GO:0016157">
    <property type="term" value="F:sucrose synthase activity"/>
    <property type="evidence" value="ECO:0007669"/>
    <property type="project" value="UniProtKB-EC"/>
</dbReference>
<dbReference type="GO" id="GO:0005985">
    <property type="term" value="P:sucrose metabolic process"/>
    <property type="evidence" value="ECO:0007669"/>
    <property type="project" value="InterPro"/>
</dbReference>
<dbReference type="FunFam" id="1.20.120.1230:FF:000001">
    <property type="entry name" value="Sucrose synthase"/>
    <property type="match status" value="1"/>
</dbReference>
<dbReference type="FunFam" id="3.10.450.330:FF:000001">
    <property type="entry name" value="Sucrose synthase"/>
    <property type="match status" value="1"/>
</dbReference>
<dbReference type="FunFam" id="3.40.50.2000:FF:000006">
    <property type="entry name" value="Sucrose synthase"/>
    <property type="match status" value="1"/>
</dbReference>
<dbReference type="Gene3D" id="1.20.120.1230">
    <property type="match status" value="1"/>
</dbReference>
<dbReference type="Gene3D" id="3.10.450.330">
    <property type="match status" value="1"/>
</dbReference>
<dbReference type="Gene3D" id="3.40.50.2000">
    <property type="entry name" value="Glycogen Phosphorylase B"/>
    <property type="match status" value="2"/>
</dbReference>
<dbReference type="InterPro" id="IPR001296">
    <property type="entry name" value="Glyco_trans_1"/>
</dbReference>
<dbReference type="InterPro" id="IPR000368">
    <property type="entry name" value="Sucrose_synth_GT-B1"/>
</dbReference>
<dbReference type="InterPro" id="IPR012820">
    <property type="entry name" value="Sucrose_synthase_pln/cyn"/>
</dbReference>
<dbReference type="InterPro" id="IPR056736">
    <property type="entry name" value="SUS_EPBD"/>
</dbReference>
<dbReference type="InterPro" id="IPR056735">
    <property type="entry name" value="SUS_N"/>
</dbReference>
<dbReference type="NCBIfam" id="TIGR02470">
    <property type="entry name" value="sucr_synth"/>
    <property type="match status" value="1"/>
</dbReference>
<dbReference type="PANTHER" id="PTHR45839">
    <property type="match status" value="1"/>
</dbReference>
<dbReference type="PANTHER" id="PTHR45839:SF7">
    <property type="entry name" value="SUCROSE SYNTHASE 1"/>
    <property type="match status" value="1"/>
</dbReference>
<dbReference type="Pfam" id="PF00534">
    <property type="entry name" value="Glycos_transf_1"/>
    <property type="match status" value="1"/>
</dbReference>
<dbReference type="Pfam" id="PF00862">
    <property type="entry name" value="GT-B_Sucrose_synth"/>
    <property type="match status" value="1"/>
</dbReference>
<dbReference type="Pfam" id="PF24862">
    <property type="entry name" value="SUS_EPBD"/>
    <property type="match status" value="1"/>
</dbReference>
<dbReference type="Pfam" id="PF24861">
    <property type="entry name" value="SUS_N"/>
    <property type="match status" value="1"/>
</dbReference>
<dbReference type="SUPFAM" id="SSF53756">
    <property type="entry name" value="UDP-Glycosyltransferase/glycogen phosphorylase"/>
    <property type="match status" value="1"/>
</dbReference>
<accession>O49845</accession>
<comment type="function">
    <text>Sucrose-cleaving enzyme that provides UDP-glucose and fructose for various metabolic pathways.</text>
</comment>
<comment type="catalytic activity">
    <reaction>
        <text>an NDP-alpha-D-glucose + D-fructose = a ribonucleoside 5'-diphosphate + sucrose + H(+)</text>
        <dbReference type="Rhea" id="RHEA:16241"/>
        <dbReference type="ChEBI" id="CHEBI:15378"/>
        <dbReference type="ChEBI" id="CHEBI:17992"/>
        <dbReference type="ChEBI" id="CHEBI:37721"/>
        <dbReference type="ChEBI" id="CHEBI:57930"/>
        <dbReference type="ChEBI" id="CHEBI:76533"/>
        <dbReference type="EC" id="2.4.1.13"/>
    </reaction>
</comment>
<comment type="subunit">
    <text evidence="1">Homotetramer.</text>
</comment>
<comment type="tissue specificity">
    <text>Exclusively expressed in flowers.</text>
</comment>
<comment type="similarity">
    <text evidence="3">Belongs to the glycosyltransferase 1 family. Plant sucrose synthase subfamily.</text>
</comment>